<sequence length="153" mass="17129">MDSIETHAKQLGQQTPLPASPEAAQLDRVPNPHADTDYLARFTAPEFTSLCPVTGQPDFATLVIDYVPDRWLVESKSLKLYLGAFRNHGAFHEDCTVGIGRRLVALLEPRWLRIGGYWYPRGGIPIDVFWQTGEPLKSVWLPDQGVAPYRGRG</sequence>
<reference key="1">
    <citation type="submission" date="2008-12" db="EMBL/GenBank/DDBJ databases">
        <title>Complete sequence of chromosome of Methylobacterium chloromethanicum CM4.</title>
        <authorList>
            <consortium name="US DOE Joint Genome Institute"/>
            <person name="Lucas S."/>
            <person name="Copeland A."/>
            <person name="Lapidus A."/>
            <person name="Glavina del Rio T."/>
            <person name="Dalin E."/>
            <person name="Tice H."/>
            <person name="Bruce D."/>
            <person name="Goodwin L."/>
            <person name="Pitluck S."/>
            <person name="Chertkov O."/>
            <person name="Brettin T."/>
            <person name="Detter J.C."/>
            <person name="Han C."/>
            <person name="Larimer F."/>
            <person name="Land M."/>
            <person name="Hauser L."/>
            <person name="Kyrpides N."/>
            <person name="Mikhailova N."/>
            <person name="Marx C."/>
            <person name="Richardson P."/>
        </authorList>
    </citation>
    <scope>NUCLEOTIDE SEQUENCE [LARGE SCALE GENOMIC DNA]</scope>
    <source>
        <strain>CM4 / NCIMB 13688</strain>
    </source>
</reference>
<gene>
    <name evidence="1" type="primary">queF</name>
    <name type="ordered locus">Mchl_3011</name>
</gene>
<dbReference type="EC" id="1.7.1.13" evidence="1"/>
<dbReference type="EMBL" id="CP001298">
    <property type="protein sequence ID" value="ACK83849.1"/>
    <property type="molecule type" value="Genomic_DNA"/>
</dbReference>
<dbReference type="RefSeq" id="WP_012254142.1">
    <property type="nucleotide sequence ID" value="NC_011757.1"/>
</dbReference>
<dbReference type="SMR" id="B7KRB3"/>
<dbReference type="GeneID" id="72990433"/>
<dbReference type="KEGG" id="mch:Mchl_3011"/>
<dbReference type="HOGENOM" id="CLU_102489_0_1_5"/>
<dbReference type="UniPathway" id="UPA00392"/>
<dbReference type="Proteomes" id="UP000002385">
    <property type="component" value="Chromosome"/>
</dbReference>
<dbReference type="GO" id="GO:0005737">
    <property type="term" value="C:cytoplasm"/>
    <property type="evidence" value="ECO:0007669"/>
    <property type="project" value="UniProtKB-SubCell"/>
</dbReference>
<dbReference type="GO" id="GO:0033739">
    <property type="term" value="F:preQ1 synthase activity"/>
    <property type="evidence" value="ECO:0007669"/>
    <property type="project" value="UniProtKB-UniRule"/>
</dbReference>
<dbReference type="GO" id="GO:0008616">
    <property type="term" value="P:queuosine biosynthetic process"/>
    <property type="evidence" value="ECO:0007669"/>
    <property type="project" value="UniProtKB-UniRule"/>
</dbReference>
<dbReference type="GO" id="GO:0006400">
    <property type="term" value="P:tRNA modification"/>
    <property type="evidence" value="ECO:0007669"/>
    <property type="project" value="UniProtKB-UniRule"/>
</dbReference>
<dbReference type="Gene3D" id="3.30.1130.10">
    <property type="match status" value="1"/>
</dbReference>
<dbReference type="HAMAP" id="MF_00818">
    <property type="entry name" value="QueF_type1"/>
    <property type="match status" value="1"/>
</dbReference>
<dbReference type="InterPro" id="IPR043133">
    <property type="entry name" value="GTP-CH-I_C/QueF"/>
</dbReference>
<dbReference type="InterPro" id="IPR050084">
    <property type="entry name" value="NADPH_dep_7-cyano-7-deazaG_red"/>
</dbReference>
<dbReference type="InterPro" id="IPR029500">
    <property type="entry name" value="QueF"/>
</dbReference>
<dbReference type="InterPro" id="IPR016856">
    <property type="entry name" value="QueF_type1"/>
</dbReference>
<dbReference type="NCBIfam" id="TIGR03139">
    <property type="entry name" value="QueF-II"/>
    <property type="match status" value="1"/>
</dbReference>
<dbReference type="PANTHER" id="PTHR34354">
    <property type="entry name" value="NADPH-DEPENDENT 7-CYANO-7-DEAZAGUANINE REDUCTASE"/>
    <property type="match status" value="1"/>
</dbReference>
<dbReference type="PANTHER" id="PTHR34354:SF1">
    <property type="entry name" value="NADPH-DEPENDENT 7-CYANO-7-DEAZAGUANINE REDUCTASE"/>
    <property type="match status" value="1"/>
</dbReference>
<dbReference type="Pfam" id="PF14489">
    <property type="entry name" value="QueF"/>
    <property type="match status" value="1"/>
</dbReference>
<dbReference type="PIRSF" id="PIRSF027377">
    <property type="entry name" value="Nitrile_oxidored_QueF"/>
    <property type="match status" value="1"/>
</dbReference>
<dbReference type="SUPFAM" id="SSF55620">
    <property type="entry name" value="Tetrahydrobiopterin biosynthesis enzymes-like"/>
    <property type="match status" value="1"/>
</dbReference>
<comment type="function">
    <text evidence="1">Catalyzes the NADPH-dependent reduction of 7-cyano-7-deazaguanine (preQ0) to 7-aminomethyl-7-deazaguanine (preQ1).</text>
</comment>
<comment type="catalytic activity">
    <reaction evidence="1">
        <text>7-aminomethyl-7-carbaguanine + 2 NADP(+) = 7-cyano-7-deazaguanine + 2 NADPH + 3 H(+)</text>
        <dbReference type="Rhea" id="RHEA:13409"/>
        <dbReference type="ChEBI" id="CHEBI:15378"/>
        <dbReference type="ChEBI" id="CHEBI:45075"/>
        <dbReference type="ChEBI" id="CHEBI:57783"/>
        <dbReference type="ChEBI" id="CHEBI:58349"/>
        <dbReference type="ChEBI" id="CHEBI:58703"/>
        <dbReference type="EC" id="1.7.1.13"/>
    </reaction>
</comment>
<comment type="pathway">
    <text evidence="1">tRNA modification; tRNA-queuosine biosynthesis.</text>
</comment>
<comment type="subcellular location">
    <subcellularLocation>
        <location evidence="1">Cytoplasm</location>
    </subcellularLocation>
</comment>
<comment type="similarity">
    <text evidence="1">Belongs to the GTP cyclohydrolase I family. QueF type 1 subfamily.</text>
</comment>
<accession>B7KRB3</accession>
<name>QUEF_METC4</name>
<protein>
    <recommendedName>
        <fullName evidence="1">NADPH-dependent 7-cyano-7-deazaguanine reductase</fullName>
        <ecNumber evidence="1">1.7.1.13</ecNumber>
    </recommendedName>
    <alternativeName>
        <fullName evidence="1">7-cyano-7-carbaguanine reductase</fullName>
    </alternativeName>
    <alternativeName>
        <fullName evidence="1">NADPH-dependent nitrile oxidoreductase</fullName>
    </alternativeName>
    <alternativeName>
        <fullName evidence="1">PreQ(0) reductase</fullName>
    </alternativeName>
</protein>
<proteinExistence type="inferred from homology"/>
<organism>
    <name type="scientific">Methylorubrum extorquens (strain CM4 / NCIMB 13688)</name>
    <name type="common">Methylobacterium extorquens</name>
    <dbReference type="NCBI Taxonomy" id="440085"/>
    <lineage>
        <taxon>Bacteria</taxon>
        <taxon>Pseudomonadati</taxon>
        <taxon>Pseudomonadota</taxon>
        <taxon>Alphaproteobacteria</taxon>
        <taxon>Hyphomicrobiales</taxon>
        <taxon>Methylobacteriaceae</taxon>
        <taxon>Methylorubrum</taxon>
    </lineage>
</organism>
<keyword id="KW-0963">Cytoplasm</keyword>
<keyword id="KW-0521">NADP</keyword>
<keyword id="KW-0560">Oxidoreductase</keyword>
<keyword id="KW-0671">Queuosine biosynthesis</keyword>
<evidence type="ECO:0000255" key="1">
    <source>
        <dbReference type="HAMAP-Rule" id="MF_00818"/>
    </source>
</evidence>
<evidence type="ECO:0000256" key="2">
    <source>
        <dbReference type="SAM" id="MobiDB-lite"/>
    </source>
</evidence>
<feature type="chain" id="PRO_1000213092" description="NADPH-dependent 7-cyano-7-deazaguanine reductase">
    <location>
        <begin position="1"/>
        <end position="153"/>
    </location>
</feature>
<feature type="region of interest" description="Disordered" evidence="2">
    <location>
        <begin position="1"/>
        <end position="30"/>
    </location>
</feature>
<feature type="active site" description="Thioimide intermediate" evidence="1">
    <location>
        <position position="51"/>
    </location>
</feature>
<feature type="active site" description="Proton donor" evidence="1">
    <location>
        <position position="58"/>
    </location>
</feature>
<feature type="binding site" evidence="1">
    <location>
        <begin position="73"/>
        <end position="75"/>
    </location>
    <ligand>
        <name>substrate</name>
    </ligand>
</feature>
<feature type="binding site" evidence="1">
    <location>
        <begin position="92"/>
        <end position="93"/>
    </location>
    <ligand>
        <name>substrate</name>
    </ligand>
</feature>